<evidence type="ECO:0000255" key="1">
    <source>
        <dbReference type="HAMAP-Rule" id="MF_00252"/>
    </source>
</evidence>
<keyword id="KW-0030">Aminoacyl-tRNA synthetase</keyword>
<keyword id="KW-0067">ATP-binding</keyword>
<keyword id="KW-0963">Cytoplasm</keyword>
<keyword id="KW-0436">Ligase</keyword>
<keyword id="KW-0460">Magnesium</keyword>
<keyword id="KW-0479">Metal-binding</keyword>
<keyword id="KW-0547">Nucleotide-binding</keyword>
<keyword id="KW-0648">Protein biosynthesis</keyword>
<keyword id="KW-1185">Reference proteome</keyword>
<feature type="chain" id="PRO_1000012853" description="Lysine--tRNA ligase">
    <location>
        <begin position="1"/>
        <end position="508"/>
    </location>
</feature>
<feature type="binding site" evidence="1">
    <location>
        <position position="418"/>
    </location>
    <ligand>
        <name>Mg(2+)</name>
        <dbReference type="ChEBI" id="CHEBI:18420"/>
        <label>1</label>
    </ligand>
</feature>
<feature type="binding site" evidence="1">
    <location>
        <position position="425"/>
    </location>
    <ligand>
        <name>Mg(2+)</name>
        <dbReference type="ChEBI" id="CHEBI:18420"/>
        <label>1</label>
    </ligand>
</feature>
<feature type="binding site" evidence="1">
    <location>
        <position position="425"/>
    </location>
    <ligand>
        <name>Mg(2+)</name>
        <dbReference type="ChEBI" id="CHEBI:18420"/>
        <label>2</label>
    </ligand>
</feature>
<reference key="1">
    <citation type="journal article" date="2004" name="Proc. Natl. Acad. Sci. U.S.A.">
        <title>Structural flexibility in the Burkholderia mallei genome.</title>
        <authorList>
            <person name="Nierman W.C."/>
            <person name="DeShazer D."/>
            <person name="Kim H.S."/>
            <person name="Tettelin H."/>
            <person name="Nelson K.E."/>
            <person name="Feldblyum T.V."/>
            <person name="Ulrich R.L."/>
            <person name="Ronning C.M."/>
            <person name="Brinkac L.M."/>
            <person name="Daugherty S.C."/>
            <person name="Davidsen T.D."/>
            <person name="DeBoy R.T."/>
            <person name="Dimitrov G."/>
            <person name="Dodson R.J."/>
            <person name="Durkin A.S."/>
            <person name="Gwinn M.L."/>
            <person name="Haft D.H."/>
            <person name="Khouri H.M."/>
            <person name="Kolonay J.F."/>
            <person name="Madupu R."/>
            <person name="Mohammoud Y."/>
            <person name="Nelson W.C."/>
            <person name="Radune D."/>
            <person name="Romero C.M."/>
            <person name="Sarria S."/>
            <person name="Selengut J."/>
            <person name="Shamblin C."/>
            <person name="Sullivan S.A."/>
            <person name="White O."/>
            <person name="Yu Y."/>
            <person name="Zafar N."/>
            <person name="Zhou L."/>
            <person name="Fraser C.M."/>
        </authorList>
    </citation>
    <scope>NUCLEOTIDE SEQUENCE [LARGE SCALE GENOMIC DNA]</scope>
    <source>
        <strain>ATCC 23344</strain>
    </source>
</reference>
<name>SYK_BURMA</name>
<sequence>MTEPTQPQAAVAADENQIVAERRDKLRALRDQGIAYPNDFQPTHHAAGLQTEYADADKEALDAKALDVAVAGRMMLKRVMGKASFATVQDGSGQIQFFVTPADVGAETYDAFKKWDLGDIVAARGVLFRTNKGELSVKCTELRLLAKALRPLPDKFHGLADQETRYRQRYVDLIVTPETRATFRARTKAIASIRKFMSDADFMEVETPMLHPIPGGAAAKPFVTHHNALDMQMFLRIAPELYLKRLIVGGFERVFEINRNFRNEGVSPRHNPEFTMMEFYAAYTDYRWLMDFTERLIRQAAVDALGTATIRYQGRELDLAKPFHRLTITQAIQKYAPNYTDGQLSDDAFLRGELKRLGVDVTQPAFLNAGIGALQLALFEETAEAQLWEPTFIIDYPIEVSPLARESDTVAGITERFELFVTGREIANGFSELNDPEDQAARFRKQVEQKDAGDEEAMFFDADYIRALEYGMPPTGGCGIGIDRLVMLLTDSPTIRDVLLFPHLRRED</sequence>
<dbReference type="EC" id="6.1.1.6" evidence="1"/>
<dbReference type="EMBL" id="CP000010">
    <property type="protein sequence ID" value="AAU47811.1"/>
    <property type="molecule type" value="Genomic_DNA"/>
</dbReference>
<dbReference type="RefSeq" id="WP_004192783.1">
    <property type="nucleotide sequence ID" value="NC_006348.1"/>
</dbReference>
<dbReference type="RefSeq" id="YP_103320.1">
    <property type="nucleotide sequence ID" value="NC_006348.1"/>
</dbReference>
<dbReference type="SMR" id="Q62IZ9"/>
<dbReference type="GeneID" id="93060838"/>
<dbReference type="KEGG" id="bma:BMA1700"/>
<dbReference type="PATRIC" id="fig|243160.12.peg.1741"/>
<dbReference type="eggNOG" id="COG1190">
    <property type="taxonomic scope" value="Bacteria"/>
</dbReference>
<dbReference type="HOGENOM" id="CLU_008255_6_0_4"/>
<dbReference type="Proteomes" id="UP000006693">
    <property type="component" value="Chromosome 1"/>
</dbReference>
<dbReference type="GO" id="GO:0005829">
    <property type="term" value="C:cytosol"/>
    <property type="evidence" value="ECO:0007669"/>
    <property type="project" value="TreeGrafter"/>
</dbReference>
<dbReference type="GO" id="GO:0005524">
    <property type="term" value="F:ATP binding"/>
    <property type="evidence" value="ECO:0007669"/>
    <property type="project" value="UniProtKB-UniRule"/>
</dbReference>
<dbReference type="GO" id="GO:0004824">
    <property type="term" value="F:lysine-tRNA ligase activity"/>
    <property type="evidence" value="ECO:0007669"/>
    <property type="project" value="UniProtKB-UniRule"/>
</dbReference>
<dbReference type="GO" id="GO:0000287">
    <property type="term" value="F:magnesium ion binding"/>
    <property type="evidence" value="ECO:0007669"/>
    <property type="project" value="UniProtKB-UniRule"/>
</dbReference>
<dbReference type="GO" id="GO:0000049">
    <property type="term" value="F:tRNA binding"/>
    <property type="evidence" value="ECO:0007669"/>
    <property type="project" value="TreeGrafter"/>
</dbReference>
<dbReference type="GO" id="GO:0006430">
    <property type="term" value="P:lysyl-tRNA aminoacylation"/>
    <property type="evidence" value="ECO:0007669"/>
    <property type="project" value="UniProtKB-UniRule"/>
</dbReference>
<dbReference type="CDD" id="cd00775">
    <property type="entry name" value="LysRS_core"/>
    <property type="match status" value="1"/>
</dbReference>
<dbReference type="CDD" id="cd04322">
    <property type="entry name" value="LysRS_N"/>
    <property type="match status" value="1"/>
</dbReference>
<dbReference type="FunFam" id="2.40.50.140:FF:000024">
    <property type="entry name" value="Lysine--tRNA ligase"/>
    <property type="match status" value="1"/>
</dbReference>
<dbReference type="FunFam" id="3.30.930.10:FF:000001">
    <property type="entry name" value="Lysine--tRNA ligase"/>
    <property type="match status" value="1"/>
</dbReference>
<dbReference type="Gene3D" id="3.30.930.10">
    <property type="entry name" value="Bira Bifunctional Protein, Domain 2"/>
    <property type="match status" value="1"/>
</dbReference>
<dbReference type="Gene3D" id="2.40.50.140">
    <property type="entry name" value="Nucleic acid-binding proteins"/>
    <property type="match status" value="1"/>
</dbReference>
<dbReference type="HAMAP" id="MF_00252">
    <property type="entry name" value="Lys_tRNA_synth_class2"/>
    <property type="match status" value="1"/>
</dbReference>
<dbReference type="InterPro" id="IPR004364">
    <property type="entry name" value="Aa-tRNA-synt_II"/>
</dbReference>
<dbReference type="InterPro" id="IPR006195">
    <property type="entry name" value="aa-tRNA-synth_II"/>
</dbReference>
<dbReference type="InterPro" id="IPR045864">
    <property type="entry name" value="aa-tRNA-synth_II/BPL/LPL"/>
</dbReference>
<dbReference type="InterPro" id="IPR002313">
    <property type="entry name" value="Lys-tRNA-ligase_II"/>
</dbReference>
<dbReference type="InterPro" id="IPR044136">
    <property type="entry name" value="Lys-tRNA-ligase_II_N"/>
</dbReference>
<dbReference type="InterPro" id="IPR018149">
    <property type="entry name" value="Lys-tRNA-synth_II_C"/>
</dbReference>
<dbReference type="InterPro" id="IPR012340">
    <property type="entry name" value="NA-bd_OB-fold"/>
</dbReference>
<dbReference type="InterPro" id="IPR004365">
    <property type="entry name" value="NA-bd_OB_tRNA"/>
</dbReference>
<dbReference type="NCBIfam" id="TIGR00499">
    <property type="entry name" value="lysS_bact"/>
    <property type="match status" value="1"/>
</dbReference>
<dbReference type="NCBIfam" id="NF001756">
    <property type="entry name" value="PRK00484.1"/>
    <property type="match status" value="1"/>
</dbReference>
<dbReference type="PANTHER" id="PTHR42918:SF15">
    <property type="entry name" value="LYSINE--TRNA LIGASE, CHLOROPLASTIC_MITOCHONDRIAL"/>
    <property type="match status" value="1"/>
</dbReference>
<dbReference type="PANTHER" id="PTHR42918">
    <property type="entry name" value="LYSYL-TRNA SYNTHETASE"/>
    <property type="match status" value="1"/>
</dbReference>
<dbReference type="Pfam" id="PF00152">
    <property type="entry name" value="tRNA-synt_2"/>
    <property type="match status" value="1"/>
</dbReference>
<dbReference type="Pfam" id="PF01336">
    <property type="entry name" value="tRNA_anti-codon"/>
    <property type="match status" value="1"/>
</dbReference>
<dbReference type="PRINTS" id="PR00982">
    <property type="entry name" value="TRNASYNTHLYS"/>
</dbReference>
<dbReference type="SUPFAM" id="SSF55681">
    <property type="entry name" value="Class II aaRS and biotin synthetases"/>
    <property type="match status" value="1"/>
</dbReference>
<dbReference type="SUPFAM" id="SSF50249">
    <property type="entry name" value="Nucleic acid-binding proteins"/>
    <property type="match status" value="1"/>
</dbReference>
<dbReference type="PROSITE" id="PS50862">
    <property type="entry name" value="AA_TRNA_LIGASE_II"/>
    <property type="match status" value="1"/>
</dbReference>
<protein>
    <recommendedName>
        <fullName evidence="1">Lysine--tRNA ligase</fullName>
        <ecNumber evidence="1">6.1.1.6</ecNumber>
    </recommendedName>
    <alternativeName>
        <fullName evidence="1">Lysyl-tRNA synthetase</fullName>
        <shortName evidence="1">LysRS</shortName>
    </alternativeName>
</protein>
<comment type="catalytic activity">
    <reaction evidence="1">
        <text>tRNA(Lys) + L-lysine + ATP = L-lysyl-tRNA(Lys) + AMP + diphosphate</text>
        <dbReference type="Rhea" id="RHEA:20792"/>
        <dbReference type="Rhea" id="RHEA-COMP:9696"/>
        <dbReference type="Rhea" id="RHEA-COMP:9697"/>
        <dbReference type="ChEBI" id="CHEBI:30616"/>
        <dbReference type="ChEBI" id="CHEBI:32551"/>
        <dbReference type="ChEBI" id="CHEBI:33019"/>
        <dbReference type="ChEBI" id="CHEBI:78442"/>
        <dbReference type="ChEBI" id="CHEBI:78529"/>
        <dbReference type="ChEBI" id="CHEBI:456215"/>
        <dbReference type="EC" id="6.1.1.6"/>
    </reaction>
</comment>
<comment type="cofactor">
    <cofactor evidence="1">
        <name>Mg(2+)</name>
        <dbReference type="ChEBI" id="CHEBI:18420"/>
    </cofactor>
    <text evidence="1">Binds 3 Mg(2+) ions per subunit.</text>
</comment>
<comment type="subunit">
    <text evidence="1">Homodimer.</text>
</comment>
<comment type="subcellular location">
    <subcellularLocation>
        <location evidence="1">Cytoplasm</location>
    </subcellularLocation>
</comment>
<comment type="similarity">
    <text evidence="1">Belongs to the class-II aminoacyl-tRNA synthetase family.</text>
</comment>
<proteinExistence type="inferred from homology"/>
<accession>Q62IZ9</accession>
<organism>
    <name type="scientific">Burkholderia mallei (strain ATCC 23344)</name>
    <dbReference type="NCBI Taxonomy" id="243160"/>
    <lineage>
        <taxon>Bacteria</taxon>
        <taxon>Pseudomonadati</taxon>
        <taxon>Pseudomonadota</taxon>
        <taxon>Betaproteobacteria</taxon>
        <taxon>Burkholderiales</taxon>
        <taxon>Burkholderiaceae</taxon>
        <taxon>Burkholderia</taxon>
        <taxon>pseudomallei group</taxon>
    </lineage>
</organism>
<gene>
    <name evidence="1" type="primary">lysS</name>
    <name type="ordered locus">BMA1700</name>
</gene>